<reference key="1">
    <citation type="journal article" date="2007" name="PLoS ONE">
        <title>Analysis of the neurotoxin complex genes in Clostridium botulinum A1-A4 and B1 strains: BoNT/A3, /Ba4 and /B1 clusters are located within plasmids.</title>
        <authorList>
            <person name="Smith T.J."/>
            <person name="Hill K.K."/>
            <person name="Foley B.T."/>
            <person name="Detter J.C."/>
            <person name="Munk A.C."/>
            <person name="Bruce D.C."/>
            <person name="Doggett N.A."/>
            <person name="Smith L.A."/>
            <person name="Marks J.D."/>
            <person name="Xie G."/>
            <person name="Brettin T.S."/>
        </authorList>
    </citation>
    <scope>NUCLEOTIDE SEQUENCE [LARGE SCALE GENOMIC DNA]</scope>
    <source>
        <strain>Okra / Type B1</strain>
    </source>
</reference>
<organism>
    <name type="scientific">Clostridium botulinum (strain Okra / Type B1)</name>
    <dbReference type="NCBI Taxonomy" id="498213"/>
    <lineage>
        <taxon>Bacteria</taxon>
        <taxon>Bacillati</taxon>
        <taxon>Bacillota</taxon>
        <taxon>Clostridia</taxon>
        <taxon>Eubacteriales</taxon>
        <taxon>Clostridiaceae</taxon>
        <taxon>Clostridium</taxon>
    </lineage>
</organism>
<feature type="chain" id="PRO_1000135389" description="Histidinol-phosphate aminotransferase">
    <location>
        <begin position="1"/>
        <end position="354"/>
    </location>
</feature>
<feature type="modified residue" description="N6-(pyridoxal phosphate)lysine" evidence="1">
    <location>
        <position position="210"/>
    </location>
</feature>
<keyword id="KW-0028">Amino-acid biosynthesis</keyword>
<keyword id="KW-0032">Aminotransferase</keyword>
<keyword id="KW-0368">Histidine biosynthesis</keyword>
<keyword id="KW-0663">Pyridoxal phosphate</keyword>
<keyword id="KW-0808">Transferase</keyword>
<name>HIS8_CLOBK</name>
<comment type="catalytic activity">
    <reaction evidence="1">
        <text>L-histidinol phosphate + 2-oxoglutarate = 3-(imidazol-4-yl)-2-oxopropyl phosphate + L-glutamate</text>
        <dbReference type="Rhea" id="RHEA:23744"/>
        <dbReference type="ChEBI" id="CHEBI:16810"/>
        <dbReference type="ChEBI" id="CHEBI:29985"/>
        <dbReference type="ChEBI" id="CHEBI:57766"/>
        <dbReference type="ChEBI" id="CHEBI:57980"/>
        <dbReference type="EC" id="2.6.1.9"/>
    </reaction>
</comment>
<comment type="cofactor">
    <cofactor evidence="1">
        <name>pyridoxal 5'-phosphate</name>
        <dbReference type="ChEBI" id="CHEBI:597326"/>
    </cofactor>
</comment>
<comment type="pathway">
    <text evidence="1">Amino-acid biosynthesis; L-histidine biosynthesis; L-histidine from 5-phospho-alpha-D-ribose 1-diphosphate: step 7/9.</text>
</comment>
<comment type="subunit">
    <text evidence="1">Homodimer.</text>
</comment>
<comment type="similarity">
    <text evidence="1">Belongs to the class-II pyridoxal-phosphate-dependent aminotransferase family. Histidinol-phosphate aminotransferase subfamily.</text>
</comment>
<accession>B1ILA9</accession>
<proteinExistence type="inferred from homology"/>
<sequence>MSKYWSNITKNIEPYVCGEQPKNKKIIKLNTNENPYPPSPKVLQAIKNAARDDLRLYPDPNCDALRKTIANYYNLSKEEVFIGNGSDEVLALSFLTFFNPEETVVFSDISYSFYPVYANLYKLDYKLAKIREDFSIDINDFKNARGGAVITNPNAPTGVYLSLDSIKQILEDNVNKVVIVDEAYIDFGGESSVNLIKDYPNVLVIQTLSKSRSLAGMRIGFALGQKELIKGLNRIKNSFNSYTIDRISSLAAIEAIKDEEYFKKCTSKVIKTRNWTINELRKIGFKIIPSKANFIFITHDTYQAEDIFIKLKDENVLVRYFNKDRISNYLRVSIGSKEEMEIFMDKIKKIINKL</sequence>
<protein>
    <recommendedName>
        <fullName evidence="1">Histidinol-phosphate aminotransferase</fullName>
        <ecNumber evidence="1">2.6.1.9</ecNumber>
    </recommendedName>
    <alternativeName>
        <fullName evidence="1">Imidazole acetol-phosphate transaminase</fullName>
    </alternativeName>
</protein>
<gene>
    <name evidence="1" type="primary">hisC</name>
    <name type="ordered locus">CLD_2981</name>
</gene>
<evidence type="ECO:0000255" key="1">
    <source>
        <dbReference type="HAMAP-Rule" id="MF_01023"/>
    </source>
</evidence>
<dbReference type="EC" id="2.6.1.9" evidence="1"/>
<dbReference type="EMBL" id="CP000939">
    <property type="protein sequence ID" value="ACA45479.1"/>
    <property type="molecule type" value="Genomic_DNA"/>
</dbReference>
<dbReference type="RefSeq" id="WP_004451728.1">
    <property type="nucleotide sequence ID" value="NC_010516.1"/>
</dbReference>
<dbReference type="SMR" id="B1ILA9"/>
<dbReference type="KEGG" id="cbb:CLD_2981"/>
<dbReference type="HOGENOM" id="CLU_017584_3_0_9"/>
<dbReference type="UniPathway" id="UPA00031">
    <property type="reaction ID" value="UER00012"/>
</dbReference>
<dbReference type="Proteomes" id="UP000008541">
    <property type="component" value="Chromosome"/>
</dbReference>
<dbReference type="GO" id="GO:0004400">
    <property type="term" value="F:histidinol-phosphate transaminase activity"/>
    <property type="evidence" value="ECO:0007669"/>
    <property type="project" value="UniProtKB-UniRule"/>
</dbReference>
<dbReference type="GO" id="GO:0030170">
    <property type="term" value="F:pyridoxal phosphate binding"/>
    <property type="evidence" value="ECO:0007669"/>
    <property type="project" value="InterPro"/>
</dbReference>
<dbReference type="GO" id="GO:0000105">
    <property type="term" value="P:L-histidine biosynthetic process"/>
    <property type="evidence" value="ECO:0007669"/>
    <property type="project" value="UniProtKB-UniRule"/>
</dbReference>
<dbReference type="CDD" id="cd00609">
    <property type="entry name" value="AAT_like"/>
    <property type="match status" value="1"/>
</dbReference>
<dbReference type="Gene3D" id="3.90.1150.10">
    <property type="entry name" value="Aspartate Aminotransferase, domain 1"/>
    <property type="match status" value="1"/>
</dbReference>
<dbReference type="Gene3D" id="3.40.640.10">
    <property type="entry name" value="Type I PLP-dependent aspartate aminotransferase-like (Major domain)"/>
    <property type="match status" value="1"/>
</dbReference>
<dbReference type="HAMAP" id="MF_01023">
    <property type="entry name" value="HisC_aminotrans_2"/>
    <property type="match status" value="1"/>
</dbReference>
<dbReference type="InterPro" id="IPR001917">
    <property type="entry name" value="Aminotrans_II_pyridoxalP_BS"/>
</dbReference>
<dbReference type="InterPro" id="IPR004839">
    <property type="entry name" value="Aminotransferase_I/II_large"/>
</dbReference>
<dbReference type="InterPro" id="IPR005861">
    <property type="entry name" value="HisP_aminotrans"/>
</dbReference>
<dbReference type="InterPro" id="IPR050106">
    <property type="entry name" value="HistidinolP_aminotransfase"/>
</dbReference>
<dbReference type="InterPro" id="IPR015424">
    <property type="entry name" value="PyrdxlP-dep_Trfase"/>
</dbReference>
<dbReference type="InterPro" id="IPR015421">
    <property type="entry name" value="PyrdxlP-dep_Trfase_major"/>
</dbReference>
<dbReference type="InterPro" id="IPR015422">
    <property type="entry name" value="PyrdxlP-dep_Trfase_small"/>
</dbReference>
<dbReference type="NCBIfam" id="TIGR01141">
    <property type="entry name" value="hisC"/>
    <property type="match status" value="1"/>
</dbReference>
<dbReference type="PANTHER" id="PTHR43643:SF3">
    <property type="entry name" value="HISTIDINOL-PHOSPHATE AMINOTRANSFERASE"/>
    <property type="match status" value="1"/>
</dbReference>
<dbReference type="PANTHER" id="PTHR43643">
    <property type="entry name" value="HISTIDINOL-PHOSPHATE AMINOTRANSFERASE 2"/>
    <property type="match status" value="1"/>
</dbReference>
<dbReference type="Pfam" id="PF00155">
    <property type="entry name" value="Aminotran_1_2"/>
    <property type="match status" value="1"/>
</dbReference>
<dbReference type="SUPFAM" id="SSF53383">
    <property type="entry name" value="PLP-dependent transferases"/>
    <property type="match status" value="1"/>
</dbReference>
<dbReference type="PROSITE" id="PS00599">
    <property type="entry name" value="AA_TRANSFER_CLASS_2"/>
    <property type="match status" value="1"/>
</dbReference>